<dbReference type="EMBL" id="AAFI02000037">
    <property type="protein sequence ID" value="EAL67083.1"/>
    <property type="molecule type" value="Genomic_DNA"/>
</dbReference>
<dbReference type="RefSeq" id="XP_641052.1">
    <property type="nucleotide sequence ID" value="XM_635960.1"/>
</dbReference>
<dbReference type="SMR" id="Q54V79"/>
<dbReference type="PaxDb" id="44689-DDB0206044"/>
<dbReference type="EnsemblProtists" id="EAL67083">
    <property type="protein sequence ID" value="EAL67083"/>
    <property type="gene ID" value="DDB_G0280563"/>
</dbReference>
<dbReference type="GeneID" id="8622610"/>
<dbReference type="KEGG" id="ddi:DDB_G0280563"/>
<dbReference type="dictyBase" id="DDB_G0280563"/>
<dbReference type="HOGENOM" id="CLU_3018279_0_0_1"/>
<dbReference type="InParanoid" id="Q54V79"/>
<dbReference type="PRO" id="PR:Q54V79"/>
<dbReference type="Proteomes" id="UP000002195">
    <property type="component" value="Chromosome 3"/>
</dbReference>
<dbReference type="GO" id="GO:0016020">
    <property type="term" value="C:membrane"/>
    <property type="evidence" value="ECO:0007669"/>
    <property type="project" value="UniProtKB-SubCell"/>
</dbReference>
<proteinExistence type="predicted"/>
<feature type="chain" id="PRO_0000352443" description="Putative uncharacterized protein DDB_G0280563">
    <location>
        <begin position="1"/>
        <end position="56"/>
    </location>
</feature>
<feature type="transmembrane region" description="Helical" evidence="1">
    <location>
        <begin position="6"/>
        <end position="26"/>
    </location>
</feature>
<protein>
    <recommendedName>
        <fullName>Putative uncharacterized protein DDB_G0280563</fullName>
    </recommendedName>
</protein>
<evidence type="ECO:0000255" key="1"/>
<evidence type="ECO:0000305" key="2"/>
<keyword id="KW-0472">Membrane</keyword>
<keyword id="KW-1185">Reference proteome</keyword>
<keyword id="KW-0812">Transmembrane</keyword>
<keyword id="KW-1133">Transmembrane helix</keyword>
<sequence>MIKKAMLLIMLYMVLVVNDLILYNILSKAIIKKSKNVWKLKHKPLKNINLETLKNY</sequence>
<gene>
    <name type="ORF">DDB_G0280563</name>
</gene>
<name>Y6044_DICDI</name>
<comment type="subcellular location">
    <subcellularLocation>
        <location evidence="2">Membrane</location>
        <topology evidence="2">Single-pass membrane protein</topology>
    </subcellularLocation>
</comment>
<accession>Q54V79</accession>
<organism>
    <name type="scientific">Dictyostelium discoideum</name>
    <name type="common">Social amoeba</name>
    <dbReference type="NCBI Taxonomy" id="44689"/>
    <lineage>
        <taxon>Eukaryota</taxon>
        <taxon>Amoebozoa</taxon>
        <taxon>Evosea</taxon>
        <taxon>Eumycetozoa</taxon>
        <taxon>Dictyostelia</taxon>
        <taxon>Dictyosteliales</taxon>
        <taxon>Dictyosteliaceae</taxon>
        <taxon>Dictyostelium</taxon>
    </lineage>
</organism>
<reference key="1">
    <citation type="journal article" date="2005" name="Nature">
        <title>The genome of the social amoeba Dictyostelium discoideum.</title>
        <authorList>
            <person name="Eichinger L."/>
            <person name="Pachebat J.A."/>
            <person name="Gloeckner G."/>
            <person name="Rajandream M.A."/>
            <person name="Sucgang R."/>
            <person name="Berriman M."/>
            <person name="Song J."/>
            <person name="Olsen R."/>
            <person name="Szafranski K."/>
            <person name="Xu Q."/>
            <person name="Tunggal B."/>
            <person name="Kummerfeld S."/>
            <person name="Madera M."/>
            <person name="Konfortov B.A."/>
            <person name="Rivero F."/>
            <person name="Bankier A.T."/>
            <person name="Lehmann R."/>
            <person name="Hamlin N."/>
            <person name="Davies R."/>
            <person name="Gaudet P."/>
            <person name="Fey P."/>
            <person name="Pilcher K."/>
            <person name="Chen G."/>
            <person name="Saunders D."/>
            <person name="Sodergren E.J."/>
            <person name="Davis P."/>
            <person name="Kerhornou A."/>
            <person name="Nie X."/>
            <person name="Hall N."/>
            <person name="Anjard C."/>
            <person name="Hemphill L."/>
            <person name="Bason N."/>
            <person name="Farbrother P."/>
            <person name="Desany B."/>
            <person name="Just E."/>
            <person name="Morio T."/>
            <person name="Rost R."/>
            <person name="Churcher C.M."/>
            <person name="Cooper J."/>
            <person name="Haydock S."/>
            <person name="van Driessche N."/>
            <person name="Cronin A."/>
            <person name="Goodhead I."/>
            <person name="Muzny D.M."/>
            <person name="Mourier T."/>
            <person name="Pain A."/>
            <person name="Lu M."/>
            <person name="Harper D."/>
            <person name="Lindsay R."/>
            <person name="Hauser H."/>
            <person name="James K.D."/>
            <person name="Quiles M."/>
            <person name="Madan Babu M."/>
            <person name="Saito T."/>
            <person name="Buchrieser C."/>
            <person name="Wardroper A."/>
            <person name="Felder M."/>
            <person name="Thangavelu M."/>
            <person name="Johnson D."/>
            <person name="Knights A."/>
            <person name="Loulseged H."/>
            <person name="Mungall K.L."/>
            <person name="Oliver K."/>
            <person name="Price C."/>
            <person name="Quail M.A."/>
            <person name="Urushihara H."/>
            <person name="Hernandez J."/>
            <person name="Rabbinowitsch E."/>
            <person name="Steffen D."/>
            <person name="Sanders M."/>
            <person name="Ma J."/>
            <person name="Kohara Y."/>
            <person name="Sharp S."/>
            <person name="Simmonds M.N."/>
            <person name="Spiegler S."/>
            <person name="Tivey A."/>
            <person name="Sugano S."/>
            <person name="White B."/>
            <person name="Walker D."/>
            <person name="Woodward J.R."/>
            <person name="Winckler T."/>
            <person name="Tanaka Y."/>
            <person name="Shaulsky G."/>
            <person name="Schleicher M."/>
            <person name="Weinstock G.M."/>
            <person name="Rosenthal A."/>
            <person name="Cox E.C."/>
            <person name="Chisholm R.L."/>
            <person name="Gibbs R.A."/>
            <person name="Loomis W.F."/>
            <person name="Platzer M."/>
            <person name="Kay R.R."/>
            <person name="Williams J.G."/>
            <person name="Dear P.H."/>
            <person name="Noegel A.A."/>
            <person name="Barrell B.G."/>
            <person name="Kuspa A."/>
        </authorList>
    </citation>
    <scope>NUCLEOTIDE SEQUENCE [LARGE SCALE GENOMIC DNA]</scope>
    <source>
        <strain>AX4</strain>
    </source>
</reference>